<evidence type="ECO:0000255" key="1">
    <source>
        <dbReference type="HAMAP-Rule" id="MF_00259"/>
    </source>
</evidence>
<gene>
    <name evidence="1" type="primary">gcvT</name>
    <name type="ordered locus">sll0171</name>
</gene>
<feature type="chain" id="PRO_0000122609" description="Aminomethyltransferase">
    <location>
        <begin position="1"/>
        <end position="372"/>
    </location>
</feature>
<keyword id="KW-0032">Aminotransferase</keyword>
<keyword id="KW-1185">Reference proteome</keyword>
<keyword id="KW-0808">Transferase</keyword>
<sequence>MANLFPALRTPLYNLITEQTTKLTTFGGWEMPVQFAGLKQEHQAVREKVGMFDISHMGKFVLTGQKVLAALQSLVPSDLDRLTPGKAQYTVLLNAQGGIIDDIIVYDQGKNPEGQERVTLIVNAATTVKDKQWLLEHLPEEIDFQDLSREKVLIALQGPEALTILQPLVDQNLGELPAFGHLEAEFLREKAFIARTGYTGEDGFEIMVSPEVGKQLWQTFGSKGVTPCGLGARDTLRLEAGMGLYGQDMNDETTPLEAGLGWLVHLDSKGDFIGRAVLTEQKANGVEKRLVGLEMLAKQIARHDYPILHNGEIMGIVTSGTLSPTLQKAIALGYVPTELAKVGQELEVEVRGKTYGIKVVKKLFYRSEQKPR</sequence>
<reference key="1">
    <citation type="journal article" date="1995" name="DNA Res.">
        <title>Sequence analysis of the genome of the unicellular cyanobacterium Synechocystis sp. strain PCC6803. I. Sequence features in the 1 Mb region from map positions 64% to 92% of the genome.</title>
        <authorList>
            <person name="Kaneko T."/>
            <person name="Tanaka A."/>
            <person name="Sato S."/>
            <person name="Kotani H."/>
            <person name="Sazuka T."/>
            <person name="Miyajima N."/>
            <person name="Sugiura M."/>
            <person name="Tabata S."/>
        </authorList>
    </citation>
    <scope>NUCLEOTIDE SEQUENCE [LARGE SCALE GENOMIC DNA]</scope>
    <source>
        <strain>ATCC 27184 / PCC 6803 / N-1</strain>
    </source>
</reference>
<reference key="2">
    <citation type="journal article" date="1996" name="DNA Res.">
        <title>Sequence analysis of the genome of the unicellular cyanobacterium Synechocystis sp. strain PCC6803. II. Sequence determination of the entire genome and assignment of potential protein-coding regions.</title>
        <authorList>
            <person name="Kaneko T."/>
            <person name="Sato S."/>
            <person name="Kotani H."/>
            <person name="Tanaka A."/>
            <person name="Asamizu E."/>
            <person name="Nakamura Y."/>
            <person name="Miyajima N."/>
            <person name="Hirosawa M."/>
            <person name="Sugiura M."/>
            <person name="Sasamoto S."/>
            <person name="Kimura T."/>
            <person name="Hosouchi T."/>
            <person name="Matsuno A."/>
            <person name="Muraki A."/>
            <person name="Nakazaki N."/>
            <person name="Naruo K."/>
            <person name="Okumura S."/>
            <person name="Shimpo S."/>
            <person name="Takeuchi C."/>
            <person name="Wada T."/>
            <person name="Watanabe A."/>
            <person name="Yamada M."/>
            <person name="Yasuda M."/>
            <person name="Tabata S."/>
        </authorList>
    </citation>
    <scope>NUCLEOTIDE SEQUENCE [LARGE SCALE GENOMIC DNA]</scope>
    <source>
        <strain>ATCC 27184 / PCC 6803 / Kazusa</strain>
    </source>
</reference>
<dbReference type="EC" id="2.1.2.10" evidence="1"/>
<dbReference type="EMBL" id="BA000022">
    <property type="protein sequence ID" value="BAA10058.1"/>
    <property type="molecule type" value="Genomic_DNA"/>
</dbReference>
<dbReference type="PIR" id="S76080">
    <property type="entry name" value="S76080"/>
</dbReference>
<dbReference type="SMR" id="P54261"/>
<dbReference type="FunCoup" id="P54261">
    <property type="interactions" value="436"/>
</dbReference>
<dbReference type="STRING" id="1148.gene:10499550"/>
<dbReference type="PaxDb" id="1148-1001434"/>
<dbReference type="EnsemblBacteria" id="BAA10058">
    <property type="protein sequence ID" value="BAA10058"/>
    <property type="gene ID" value="BAA10058"/>
</dbReference>
<dbReference type="KEGG" id="syn:sll0171"/>
<dbReference type="eggNOG" id="COG0404">
    <property type="taxonomic scope" value="Bacteria"/>
</dbReference>
<dbReference type="InParanoid" id="P54261"/>
<dbReference type="PhylomeDB" id="P54261"/>
<dbReference type="BioCyc" id="MetaCyc:MONOMER-22026"/>
<dbReference type="BRENDA" id="1.4.1.27">
    <property type="organism ID" value="6192"/>
</dbReference>
<dbReference type="Proteomes" id="UP000001425">
    <property type="component" value="Chromosome"/>
</dbReference>
<dbReference type="GO" id="GO:0005829">
    <property type="term" value="C:cytosol"/>
    <property type="evidence" value="ECO:0000318"/>
    <property type="project" value="GO_Central"/>
</dbReference>
<dbReference type="GO" id="GO:0005960">
    <property type="term" value="C:glycine cleavage complex"/>
    <property type="evidence" value="ECO:0007669"/>
    <property type="project" value="InterPro"/>
</dbReference>
<dbReference type="GO" id="GO:0004047">
    <property type="term" value="F:aminomethyltransferase activity"/>
    <property type="evidence" value="ECO:0007669"/>
    <property type="project" value="UniProtKB-UniRule"/>
</dbReference>
<dbReference type="GO" id="GO:0008483">
    <property type="term" value="F:transaminase activity"/>
    <property type="evidence" value="ECO:0007669"/>
    <property type="project" value="UniProtKB-KW"/>
</dbReference>
<dbReference type="GO" id="GO:0019464">
    <property type="term" value="P:glycine decarboxylation via glycine cleavage system"/>
    <property type="evidence" value="ECO:0007669"/>
    <property type="project" value="UniProtKB-UniRule"/>
</dbReference>
<dbReference type="FunFam" id="2.40.30.110:FF:000003">
    <property type="entry name" value="Aminomethyltransferase"/>
    <property type="match status" value="1"/>
</dbReference>
<dbReference type="FunFam" id="3.30.70.1400:FF:000001">
    <property type="entry name" value="Aminomethyltransferase"/>
    <property type="match status" value="1"/>
</dbReference>
<dbReference type="FunFam" id="4.10.1250.10:FF:000001">
    <property type="entry name" value="Aminomethyltransferase"/>
    <property type="match status" value="1"/>
</dbReference>
<dbReference type="Gene3D" id="2.40.30.110">
    <property type="entry name" value="Aminomethyltransferase beta-barrel domains"/>
    <property type="match status" value="1"/>
</dbReference>
<dbReference type="Gene3D" id="3.30.70.1400">
    <property type="entry name" value="Aminomethyltransferase beta-barrel domains"/>
    <property type="match status" value="1"/>
</dbReference>
<dbReference type="Gene3D" id="4.10.1250.10">
    <property type="entry name" value="Aminomethyltransferase fragment"/>
    <property type="match status" value="1"/>
</dbReference>
<dbReference type="Gene3D" id="3.30.1360.120">
    <property type="entry name" value="Probable tRNA modification gtpase trme, domain 1"/>
    <property type="match status" value="1"/>
</dbReference>
<dbReference type="HAMAP" id="MF_00259">
    <property type="entry name" value="GcvT"/>
    <property type="match status" value="1"/>
</dbReference>
<dbReference type="InterPro" id="IPR006223">
    <property type="entry name" value="GCS_T"/>
</dbReference>
<dbReference type="InterPro" id="IPR022903">
    <property type="entry name" value="GCS_T_bac"/>
</dbReference>
<dbReference type="InterPro" id="IPR013977">
    <property type="entry name" value="GCST_C"/>
</dbReference>
<dbReference type="InterPro" id="IPR006222">
    <property type="entry name" value="GCV_T_N"/>
</dbReference>
<dbReference type="InterPro" id="IPR028896">
    <property type="entry name" value="GcvT/YgfZ/DmdA"/>
</dbReference>
<dbReference type="InterPro" id="IPR029043">
    <property type="entry name" value="GcvT/YgfZ_C"/>
</dbReference>
<dbReference type="InterPro" id="IPR027266">
    <property type="entry name" value="TrmE/GcvT_dom1"/>
</dbReference>
<dbReference type="NCBIfam" id="TIGR00528">
    <property type="entry name" value="gcvT"/>
    <property type="match status" value="1"/>
</dbReference>
<dbReference type="NCBIfam" id="NF001567">
    <property type="entry name" value="PRK00389.1"/>
    <property type="match status" value="1"/>
</dbReference>
<dbReference type="PANTHER" id="PTHR43757">
    <property type="entry name" value="AMINOMETHYLTRANSFERASE"/>
    <property type="match status" value="1"/>
</dbReference>
<dbReference type="PANTHER" id="PTHR43757:SF2">
    <property type="entry name" value="AMINOMETHYLTRANSFERASE, MITOCHONDRIAL"/>
    <property type="match status" value="1"/>
</dbReference>
<dbReference type="Pfam" id="PF01571">
    <property type="entry name" value="GCV_T"/>
    <property type="match status" value="1"/>
</dbReference>
<dbReference type="Pfam" id="PF08669">
    <property type="entry name" value="GCV_T_C"/>
    <property type="match status" value="1"/>
</dbReference>
<dbReference type="PIRSF" id="PIRSF006487">
    <property type="entry name" value="GcvT"/>
    <property type="match status" value="1"/>
</dbReference>
<dbReference type="SUPFAM" id="SSF101790">
    <property type="entry name" value="Aminomethyltransferase beta-barrel domain"/>
    <property type="match status" value="1"/>
</dbReference>
<dbReference type="SUPFAM" id="SSF103025">
    <property type="entry name" value="Folate-binding domain"/>
    <property type="match status" value="1"/>
</dbReference>
<comment type="function">
    <text evidence="1">The glycine cleavage system catalyzes the degradation of glycine.</text>
</comment>
<comment type="catalytic activity">
    <reaction evidence="1">
        <text>N(6)-[(R)-S(8)-aminomethyldihydrolipoyl]-L-lysyl-[protein] + (6S)-5,6,7,8-tetrahydrofolate = N(6)-[(R)-dihydrolipoyl]-L-lysyl-[protein] + (6R)-5,10-methylene-5,6,7,8-tetrahydrofolate + NH4(+)</text>
        <dbReference type="Rhea" id="RHEA:16945"/>
        <dbReference type="Rhea" id="RHEA-COMP:10475"/>
        <dbReference type="Rhea" id="RHEA-COMP:10492"/>
        <dbReference type="ChEBI" id="CHEBI:15636"/>
        <dbReference type="ChEBI" id="CHEBI:28938"/>
        <dbReference type="ChEBI" id="CHEBI:57453"/>
        <dbReference type="ChEBI" id="CHEBI:83100"/>
        <dbReference type="ChEBI" id="CHEBI:83143"/>
        <dbReference type="EC" id="2.1.2.10"/>
    </reaction>
</comment>
<comment type="subunit">
    <text evidence="1">The glycine cleavage system is composed of four proteins: P, T, L and H.</text>
</comment>
<comment type="similarity">
    <text evidence="1">Belongs to the GcvT family.</text>
</comment>
<protein>
    <recommendedName>
        <fullName evidence="1">Aminomethyltransferase</fullName>
        <ecNumber evidence="1">2.1.2.10</ecNumber>
    </recommendedName>
    <alternativeName>
        <fullName evidence="1">Glycine cleavage system T protein</fullName>
    </alternativeName>
</protein>
<accession>P54261</accession>
<organism>
    <name type="scientific">Synechocystis sp. (strain ATCC 27184 / PCC 6803 / Kazusa)</name>
    <dbReference type="NCBI Taxonomy" id="1111708"/>
    <lineage>
        <taxon>Bacteria</taxon>
        <taxon>Bacillati</taxon>
        <taxon>Cyanobacteriota</taxon>
        <taxon>Cyanophyceae</taxon>
        <taxon>Synechococcales</taxon>
        <taxon>Merismopediaceae</taxon>
        <taxon>Synechocystis</taxon>
    </lineage>
</organism>
<proteinExistence type="inferred from homology"/>
<name>GCST_SYNY3</name>